<name>ERPA_JANMA</name>
<reference key="1">
    <citation type="journal article" date="2007" name="PLoS Genet.">
        <title>Genome analysis of Minibacterium massiliensis highlights the convergent evolution of water-living bacteria.</title>
        <authorList>
            <person name="Audic S."/>
            <person name="Robert C."/>
            <person name="Campagna B."/>
            <person name="Parinello H."/>
            <person name="Claverie J.-M."/>
            <person name="Raoult D."/>
            <person name="Drancourt M."/>
        </authorList>
    </citation>
    <scope>NUCLEOTIDE SEQUENCE [LARGE SCALE GENOMIC DNA]</scope>
    <source>
        <strain>Marseille</strain>
    </source>
</reference>
<dbReference type="EMBL" id="CP000269">
    <property type="protein sequence ID" value="ABR90057.1"/>
    <property type="molecule type" value="Genomic_DNA"/>
</dbReference>
<dbReference type="RefSeq" id="WP_012078164.1">
    <property type="nucleotide sequence ID" value="NC_009659.1"/>
</dbReference>
<dbReference type="SMR" id="A6SUP2"/>
<dbReference type="STRING" id="375286.mma_0299"/>
<dbReference type="KEGG" id="mms:mma_0299"/>
<dbReference type="eggNOG" id="COG0316">
    <property type="taxonomic scope" value="Bacteria"/>
</dbReference>
<dbReference type="HOGENOM" id="CLU_069054_5_3_4"/>
<dbReference type="OrthoDB" id="9801228at2"/>
<dbReference type="Proteomes" id="UP000006388">
    <property type="component" value="Chromosome"/>
</dbReference>
<dbReference type="GO" id="GO:0051537">
    <property type="term" value="F:2 iron, 2 sulfur cluster binding"/>
    <property type="evidence" value="ECO:0007669"/>
    <property type="project" value="TreeGrafter"/>
</dbReference>
<dbReference type="GO" id="GO:0051539">
    <property type="term" value="F:4 iron, 4 sulfur cluster binding"/>
    <property type="evidence" value="ECO:0007669"/>
    <property type="project" value="TreeGrafter"/>
</dbReference>
<dbReference type="GO" id="GO:0005506">
    <property type="term" value="F:iron ion binding"/>
    <property type="evidence" value="ECO:0007669"/>
    <property type="project" value="UniProtKB-UniRule"/>
</dbReference>
<dbReference type="GO" id="GO:0016226">
    <property type="term" value="P:iron-sulfur cluster assembly"/>
    <property type="evidence" value="ECO:0007669"/>
    <property type="project" value="UniProtKB-UniRule"/>
</dbReference>
<dbReference type="FunFam" id="2.60.300.12:FF:000002">
    <property type="entry name" value="Iron-sulfur cluster insertion protein ErpA"/>
    <property type="match status" value="1"/>
</dbReference>
<dbReference type="Gene3D" id="2.60.300.12">
    <property type="entry name" value="HesB-like domain"/>
    <property type="match status" value="1"/>
</dbReference>
<dbReference type="HAMAP" id="MF_01380">
    <property type="entry name" value="Fe_S_insert_ErpA"/>
    <property type="match status" value="1"/>
</dbReference>
<dbReference type="InterPro" id="IPR000361">
    <property type="entry name" value="FeS_biogenesis"/>
</dbReference>
<dbReference type="InterPro" id="IPR016092">
    <property type="entry name" value="FeS_cluster_insertion"/>
</dbReference>
<dbReference type="InterPro" id="IPR017870">
    <property type="entry name" value="FeS_cluster_insertion_CS"/>
</dbReference>
<dbReference type="InterPro" id="IPR023063">
    <property type="entry name" value="FeS_cluster_insertion_RrpA"/>
</dbReference>
<dbReference type="InterPro" id="IPR035903">
    <property type="entry name" value="HesB-like_dom_sf"/>
</dbReference>
<dbReference type="NCBIfam" id="TIGR00049">
    <property type="entry name" value="iron-sulfur cluster assembly accessory protein"/>
    <property type="match status" value="1"/>
</dbReference>
<dbReference type="NCBIfam" id="NF010147">
    <property type="entry name" value="PRK13623.1"/>
    <property type="match status" value="1"/>
</dbReference>
<dbReference type="PANTHER" id="PTHR43011">
    <property type="entry name" value="IRON-SULFUR CLUSTER ASSEMBLY 2 HOMOLOG, MITOCHONDRIAL"/>
    <property type="match status" value="1"/>
</dbReference>
<dbReference type="PANTHER" id="PTHR43011:SF1">
    <property type="entry name" value="IRON-SULFUR CLUSTER ASSEMBLY 2 HOMOLOG, MITOCHONDRIAL"/>
    <property type="match status" value="1"/>
</dbReference>
<dbReference type="Pfam" id="PF01521">
    <property type="entry name" value="Fe-S_biosyn"/>
    <property type="match status" value="1"/>
</dbReference>
<dbReference type="SUPFAM" id="SSF89360">
    <property type="entry name" value="HesB-like domain"/>
    <property type="match status" value="1"/>
</dbReference>
<dbReference type="PROSITE" id="PS01152">
    <property type="entry name" value="HESB"/>
    <property type="match status" value="1"/>
</dbReference>
<comment type="function">
    <text evidence="1">Required for insertion of 4Fe-4S clusters.</text>
</comment>
<comment type="cofactor">
    <cofactor evidence="1">
        <name>iron-sulfur cluster</name>
        <dbReference type="ChEBI" id="CHEBI:30408"/>
    </cofactor>
    <text evidence="1">Binds 1 iron-sulfur cluster per subunit.</text>
</comment>
<comment type="subunit">
    <text evidence="1">Homodimer.</text>
</comment>
<comment type="similarity">
    <text evidence="1">Belongs to the HesB/IscA family.</text>
</comment>
<gene>
    <name evidence="1" type="primary">erpA</name>
    <name type="ordered locus">mma_0299</name>
</gene>
<keyword id="KW-0408">Iron</keyword>
<keyword id="KW-0411">Iron-sulfur</keyword>
<keyword id="KW-0479">Metal-binding</keyword>
<accession>A6SUP2</accession>
<sequence length="116" mass="12497">MNAVAEMPSPIVFSDSAAMKVAELIEEEGNPDLKLRVFVQGGGCSGFQYGFTFDEIVNEDDTTMTKNGVQLLIDSMSYQYLVGAEIDYKDDLEGAQFVIKNPNATTTCGCGSSFSA</sequence>
<organism>
    <name type="scientific">Janthinobacterium sp. (strain Marseille)</name>
    <name type="common">Minibacterium massiliensis</name>
    <dbReference type="NCBI Taxonomy" id="375286"/>
    <lineage>
        <taxon>Bacteria</taxon>
        <taxon>Pseudomonadati</taxon>
        <taxon>Pseudomonadota</taxon>
        <taxon>Betaproteobacteria</taxon>
        <taxon>Burkholderiales</taxon>
        <taxon>Oxalobacteraceae</taxon>
        <taxon>Janthinobacterium</taxon>
    </lineage>
</organism>
<feature type="chain" id="PRO_0000311496" description="Putative iron-sulfur cluster insertion protein ErpA">
    <location>
        <begin position="1"/>
        <end position="116"/>
    </location>
</feature>
<feature type="binding site" evidence="1">
    <location>
        <position position="44"/>
    </location>
    <ligand>
        <name>iron-sulfur cluster</name>
        <dbReference type="ChEBI" id="CHEBI:30408"/>
    </ligand>
</feature>
<feature type="binding site" evidence="1">
    <location>
        <position position="108"/>
    </location>
    <ligand>
        <name>iron-sulfur cluster</name>
        <dbReference type="ChEBI" id="CHEBI:30408"/>
    </ligand>
</feature>
<feature type="binding site" evidence="1">
    <location>
        <position position="110"/>
    </location>
    <ligand>
        <name>iron-sulfur cluster</name>
        <dbReference type="ChEBI" id="CHEBI:30408"/>
    </ligand>
</feature>
<proteinExistence type="inferred from homology"/>
<evidence type="ECO:0000255" key="1">
    <source>
        <dbReference type="HAMAP-Rule" id="MF_01380"/>
    </source>
</evidence>
<protein>
    <recommendedName>
        <fullName evidence="1">Putative iron-sulfur cluster insertion protein ErpA</fullName>
    </recommendedName>
</protein>